<dbReference type="EC" id="3.5.1.105" evidence="3"/>
<dbReference type="EMBL" id="X66725">
    <property type="protein sequence ID" value="CAA47260.1"/>
    <property type="molecule type" value="Genomic_DNA"/>
</dbReference>
<dbReference type="EMBL" id="X66725">
    <property type="protein sequence ID" value="CAA47261.1"/>
    <property type="molecule type" value="Genomic_DNA"/>
</dbReference>
<dbReference type="EMBL" id="U00096">
    <property type="protein sequence ID" value="AAC74803.1"/>
    <property type="molecule type" value="Genomic_DNA"/>
</dbReference>
<dbReference type="EMBL" id="AP009048">
    <property type="protein sequence ID" value="BAA15514.1"/>
    <property type="molecule type" value="Genomic_DNA"/>
</dbReference>
<dbReference type="EMBL" id="X52890">
    <property type="status" value="NOT_ANNOTATED_CDS"/>
    <property type="molecule type" value="Genomic_DNA"/>
</dbReference>
<dbReference type="EMBL" id="M55161">
    <property type="status" value="NOT_ANNOTATED_CDS"/>
    <property type="molecule type" value="Genomic_DNA"/>
</dbReference>
<dbReference type="PIR" id="E64932">
    <property type="entry name" value="E64932"/>
</dbReference>
<dbReference type="RefSeq" id="NP_416247.1">
    <property type="nucleotide sequence ID" value="NC_000913.3"/>
</dbReference>
<dbReference type="RefSeq" id="WP_000440471.1">
    <property type="nucleotide sequence ID" value="NZ_SSZK01000001.1"/>
</dbReference>
<dbReference type="SMR" id="P37794"/>
<dbReference type="BioGRID" id="4260305">
    <property type="interactions" value="21"/>
</dbReference>
<dbReference type="FunCoup" id="P37794">
    <property type="interactions" value="44"/>
</dbReference>
<dbReference type="IntAct" id="P37794">
    <property type="interactions" value="4"/>
</dbReference>
<dbReference type="STRING" id="511145.b1733"/>
<dbReference type="jPOST" id="P37794"/>
<dbReference type="PaxDb" id="511145-b1733"/>
<dbReference type="EnsemblBacteria" id="AAC74803">
    <property type="protein sequence ID" value="AAC74803"/>
    <property type="gene ID" value="b1733"/>
</dbReference>
<dbReference type="GeneID" id="946231"/>
<dbReference type="KEGG" id="ecj:JW1722"/>
<dbReference type="KEGG" id="eco:b1733"/>
<dbReference type="KEGG" id="ecoc:C3026_09905"/>
<dbReference type="PATRIC" id="fig|1411691.4.peg.523"/>
<dbReference type="EchoBASE" id="EB2115"/>
<dbReference type="eggNOG" id="COG3394">
    <property type="taxonomic scope" value="Bacteria"/>
</dbReference>
<dbReference type="HOGENOM" id="CLU_064244_4_1_6"/>
<dbReference type="InParanoid" id="P37794"/>
<dbReference type="OMA" id="DHIDSHH"/>
<dbReference type="OrthoDB" id="9774177at2"/>
<dbReference type="PhylomeDB" id="P37794"/>
<dbReference type="BioCyc" id="EcoCyc:EG12198-MONOMER"/>
<dbReference type="BioCyc" id="MetaCyc:EG12198-MONOMER"/>
<dbReference type="BRENDA" id="3.5.1.105">
    <property type="organism ID" value="2026"/>
</dbReference>
<dbReference type="UniPathway" id="UPA00349"/>
<dbReference type="PRO" id="PR:P37794"/>
<dbReference type="Proteomes" id="UP000000625">
    <property type="component" value="Chromosome"/>
</dbReference>
<dbReference type="GO" id="GO:0005737">
    <property type="term" value="C:cytoplasm"/>
    <property type="evidence" value="ECO:0007669"/>
    <property type="project" value="UniProtKB-SubCell"/>
</dbReference>
<dbReference type="GO" id="GO:0036311">
    <property type="term" value="F:chitin disaccharide deacetylase activity"/>
    <property type="evidence" value="ECO:0007669"/>
    <property type="project" value="UniProtKB-UniRule"/>
</dbReference>
<dbReference type="GO" id="GO:0019213">
    <property type="term" value="F:deacetylase activity"/>
    <property type="evidence" value="ECO:0000315"/>
    <property type="project" value="EcoCyc"/>
</dbReference>
<dbReference type="GO" id="GO:0052773">
    <property type="term" value="F:diacetylchitobiose deacetylase activity"/>
    <property type="evidence" value="ECO:0000314"/>
    <property type="project" value="EcoCyc"/>
</dbReference>
<dbReference type="GO" id="GO:0046872">
    <property type="term" value="F:metal ion binding"/>
    <property type="evidence" value="ECO:0007669"/>
    <property type="project" value="UniProtKB-KW"/>
</dbReference>
<dbReference type="GO" id="GO:0006032">
    <property type="term" value="P:chitin catabolic process"/>
    <property type="evidence" value="ECO:0007669"/>
    <property type="project" value="UniProtKB-UniPathway"/>
</dbReference>
<dbReference type="GO" id="GO:0052777">
    <property type="term" value="P:diacetylchitobiose catabolic process"/>
    <property type="evidence" value="ECO:0000315"/>
    <property type="project" value="EcoCyc"/>
</dbReference>
<dbReference type="GO" id="GO:0000272">
    <property type="term" value="P:polysaccharide catabolic process"/>
    <property type="evidence" value="ECO:0007669"/>
    <property type="project" value="UniProtKB-UniRule"/>
</dbReference>
<dbReference type="CDD" id="cd10803">
    <property type="entry name" value="YdjC_EF3048_like"/>
    <property type="match status" value="1"/>
</dbReference>
<dbReference type="FunFam" id="3.20.20.370:FF:000001">
    <property type="entry name" value="Chitooligosaccharide deacetylase"/>
    <property type="match status" value="1"/>
</dbReference>
<dbReference type="Gene3D" id="3.20.20.370">
    <property type="entry name" value="Glycoside hydrolase/deacetylase"/>
    <property type="match status" value="1"/>
</dbReference>
<dbReference type="HAMAP" id="MF_01246">
    <property type="entry name" value="COD"/>
    <property type="match status" value="1"/>
</dbReference>
<dbReference type="InterPro" id="IPR022948">
    <property type="entry name" value="COD_ChbG_bac"/>
</dbReference>
<dbReference type="InterPro" id="IPR011330">
    <property type="entry name" value="Glyco_hydro/deAcase_b/a-brl"/>
</dbReference>
<dbReference type="InterPro" id="IPR006879">
    <property type="entry name" value="YdjC-like"/>
</dbReference>
<dbReference type="NCBIfam" id="NF002559">
    <property type="entry name" value="PRK02134.1"/>
    <property type="match status" value="1"/>
</dbReference>
<dbReference type="PANTHER" id="PTHR31609:SF1">
    <property type="entry name" value="CARBOHYDRATE DEACETYLASE"/>
    <property type="match status" value="1"/>
</dbReference>
<dbReference type="PANTHER" id="PTHR31609">
    <property type="entry name" value="YDJC DEACETYLASE FAMILY MEMBER"/>
    <property type="match status" value="1"/>
</dbReference>
<dbReference type="Pfam" id="PF04794">
    <property type="entry name" value="YdjC"/>
    <property type="match status" value="1"/>
</dbReference>
<dbReference type="SUPFAM" id="SSF88713">
    <property type="entry name" value="Glycoside hydrolase/deacetylase"/>
    <property type="match status" value="1"/>
</dbReference>
<organism>
    <name type="scientific">Escherichia coli (strain K12)</name>
    <dbReference type="NCBI Taxonomy" id="83333"/>
    <lineage>
        <taxon>Bacteria</taxon>
        <taxon>Pseudomonadati</taxon>
        <taxon>Pseudomonadota</taxon>
        <taxon>Gammaproteobacteria</taxon>
        <taxon>Enterobacterales</taxon>
        <taxon>Enterobacteriaceae</taxon>
        <taxon>Escherichia</taxon>
    </lineage>
</organism>
<feature type="chain" id="PRO_0000051589" description="Chitooligosaccharide deacetylase ChbG">
    <location>
        <begin position="1"/>
        <end position="249"/>
    </location>
</feature>
<feature type="binding site" evidence="1">
    <location>
        <position position="61"/>
    </location>
    <ligand>
        <name>Mg(2+)</name>
        <dbReference type="ChEBI" id="CHEBI:18420"/>
    </ligand>
</feature>
<feature type="binding site" evidence="1">
    <location>
        <position position="125"/>
    </location>
    <ligand>
        <name>Mg(2+)</name>
        <dbReference type="ChEBI" id="CHEBI:18420"/>
    </ligand>
</feature>
<feature type="mutagenesis site" description="Unable to induce CnbR and to grow on chitobiose." evidence="3">
    <original>D</original>
    <variation>A</variation>
    <location>
        <position position="11"/>
    </location>
</feature>
<feature type="mutagenesis site" description="Unable to induce CnbR and to grow on chitobiose." evidence="3">
    <original>H</original>
    <variation>A</variation>
    <location>
        <position position="61"/>
    </location>
</feature>
<feature type="mutagenesis site" description="Unable to induce CnbR and to grow on chitobiose." evidence="3">
    <original>H</original>
    <variation>A</variation>
    <location>
        <position position="125"/>
    </location>
</feature>
<feature type="sequence conflict" description="In Ref. 1; CAA47260 and 5; X52890." evidence="7" ref="1 5">
    <original>I</original>
    <variation>L</variation>
    <location>
        <position position="6"/>
    </location>
</feature>
<feature type="sequence conflict" description="In Ref. 1; CAA47260 and 5; X52890." evidence="7" ref="1 5">
    <original>KGQNYGIIEACRNGIVTSTTALVNG</original>
    <variation>QRTELRHYRGLSQWDCHCRRRHCEW</variation>
    <location>
        <begin position="16"/>
        <end position="40"/>
    </location>
</feature>
<feature type="sequence conflict" description="In Ref. 1; CAA47260 and 5; X52890." evidence="7" ref="1 5">
    <original>Q</original>
    <variation>H</variation>
    <location>
        <position position="48"/>
    </location>
</feature>
<feature type="sequence conflict" description="In Ref. 1; CAA47260 and 5; X52890." evidence="7" ref="1 5">
    <original>R</original>
    <variation>C</variation>
    <location>
        <position position="51"/>
    </location>
</feature>
<feature type="sequence conflict" description="In Ref. 1; CAA47260 and 5; X52890." evidence="7" ref="1 5">
    <original>S</original>
    <variation>I</variation>
    <location>
        <position position="55"/>
    </location>
</feature>
<feature type="sequence conflict" description="In Ref. 1; CAA47260 and 5; X52890." evidence="7" ref="1 5">
    <original>T</original>
    <variation>I</variation>
    <location>
        <position position="65"/>
    </location>
</feature>
<sequence>MERLLIVNADDFGLSKGQNYGIIEACRNGIVTSTTALVNGQAIDHAVQLSRDEPSLAIGMHFVLTMGKPLTAMPGLTRDGVLGKWIWQLAEEDALPLEEITQELVSQYLRFIELFGRKPTHLDSHHHVHMFPQIFPIVARFAAEQGIALRADRQMAFDLPVNLRTTQGFSSAFYGEEISESLFLQVLDDAGHRGDRSLEVMCHPAFIDNTIRQSAYCFPRLTELDVLTSASLKGAIAQRGYRLGSYRDV</sequence>
<name>CHBG_ECOLI</name>
<comment type="function">
    <text evidence="3">ChbG is essential for growth on the acetylated chitooligosaccharides chitobiose and chitotriose but is dispensable for growth on cellobiose and chitosan dimer, the deacetylated form of chitobiose. Deacetylation of chitobiose-6-P and chitotriose-6-P is necessary for both the activation of the chb promoter by the regulatory protein ChbR and the hydrolysis of phosphorylated beta-glucosides by the phospho-beta-glucosidase ChbF. Catalyzes the removal of only one acetyl group from chitobiose-6-P to yield monoacetylchitobiose-6-P, the inducer of ChbR and the substrate of ChbF. It can also use chitobiose and chitotriose as substrates.</text>
</comment>
<comment type="catalytic activity">
    <reaction evidence="3">
        <text>N,N'-diacetylchitobiose + H2O = N-acetyl-beta-D-glucosaminyl-(1-&gt;4)-D-glucosamine + acetate</text>
        <dbReference type="Rhea" id="RHEA:27469"/>
        <dbReference type="ChEBI" id="CHEBI:15377"/>
        <dbReference type="ChEBI" id="CHEBI:28681"/>
        <dbReference type="ChEBI" id="CHEBI:30089"/>
        <dbReference type="ChEBI" id="CHEBI:59910"/>
        <dbReference type="EC" id="3.5.1.105"/>
    </reaction>
</comment>
<comment type="catalytic activity">
    <reaction evidence="3">
        <text>diacetylchitobiose-6'-phosphate + H2O = N'-monoacetylchitobiose-6'-phosphate + acetate</text>
        <dbReference type="Rhea" id="RHEA:35083"/>
        <dbReference type="ChEBI" id="CHEBI:15377"/>
        <dbReference type="ChEBI" id="CHEBI:30089"/>
        <dbReference type="ChEBI" id="CHEBI:64883"/>
        <dbReference type="ChEBI" id="CHEBI:71315"/>
    </reaction>
</comment>
<comment type="cofactor">
    <cofactor evidence="1">
        <name>Mg(2+)</name>
        <dbReference type="ChEBI" id="CHEBI:18420"/>
    </cofactor>
</comment>
<comment type="pathway">
    <text evidence="8">Glycan degradation; chitin degradation.</text>
</comment>
<comment type="subunit">
    <text evidence="2">Homodimer.</text>
</comment>
<comment type="subcellular location">
    <subcellularLocation>
        <location evidence="3">Cytoplasm</location>
    </subcellularLocation>
</comment>
<comment type="induction">
    <text evidence="4">By N,N'-diacetylchitobiose.</text>
</comment>
<comment type="disruption phenotype">
    <text evidence="3">Cells lacking this gene are unable to grow on chitobiose and chitotriose.</text>
</comment>
<comment type="similarity">
    <text evidence="7">Belongs to the YdjC deacetylase family. ChbG subfamily.</text>
</comment>
<comment type="caution">
    <text evidence="7">Was originally characterized as part of a cryptic cel operon for a cellobiose degradation system (PubMed:2179047, PubMed:8121401). The Cel+ phenotype is due to mutations making expression chitobiose-independent and altering the substrate specificity.</text>
</comment>
<proteinExistence type="evidence at protein level"/>
<reference key="1">
    <citation type="journal article" date="1994" name="Mol. Gen. Genet.">
        <title>A luxAB transcriptional fusion to the cryptic celF gene of Escherichia coli displays increased luminescence in the presence of nickel.</title>
        <authorList>
            <person name="Guzzo A."/>
            <person name="Dubow M.S."/>
        </authorList>
    </citation>
    <scope>NUCLEOTIDE SEQUENCE [GENOMIC DNA]</scope>
    <source>
        <strain>K12 / DH1 / ATCC 33849 / DSM 4235 / NCIB 12045</strain>
    </source>
</reference>
<reference key="2">
    <citation type="journal article" date="1996" name="DNA Res.">
        <title>A 570-kb DNA sequence of the Escherichia coli K-12 genome corresponding to the 28.0-40.1 min region on the linkage map.</title>
        <authorList>
            <person name="Aiba H."/>
            <person name="Baba T."/>
            <person name="Fujita K."/>
            <person name="Hayashi K."/>
            <person name="Inada T."/>
            <person name="Isono K."/>
            <person name="Itoh T."/>
            <person name="Kasai H."/>
            <person name="Kashimoto K."/>
            <person name="Kimura S."/>
            <person name="Kitakawa M."/>
            <person name="Kitagawa M."/>
            <person name="Makino K."/>
            <person name="Miki T."/>
            <person name="Mizobuchi K."/>
            <person name="Mori H."/>
            <person name="Mori T."/>
            <person name="Motomura K."/>
            <person name="Nakade S."/>
            <person name="Nakamura Y."/>
            <person name="Nashimoto H."/>
            <person name="Nishio Y."/>
            <person name="Oshima T."/>
            <person name="Saito N."/>
            <person name="Sampei G."/>
            <person name="Seki Y."/>
            <person name="Sivasundaram S."/>
            <person name="Tagami H."/>
            <person name="Takeda J."/>
            <person name="Takemoto K."/>
            <person name="Takeuchi Y."/>
            <person name="Wada C."/>
            <person name="Yamamoto Y."/>
            <person name="Horiuchi T."/>
        </authorList>
    </citation>
    <scope>NUCLEOTIDE SEQUENCE [LARGE SCALE GENOMIC DNA]</scope>
    <source>
        <strain>K12 / W3110 / ATCC 27325 / DSM 5911</strain>
    </source>
</reference>
<reference key="3">
    <citation type="journal article" date="1997" name="Science">
        <title>The complete genome sequence of Escherichia coli K-12.</title>
        <authorList>
            <person name="Blattner F.R."/>
            <person name="Plunkett G. III"/>
            <person name="Bloch C.A."/>
            <person name="Perna N.T."/>
            <person name="Burland V."/>
            <person name="Riley M."/>
            <person name="Collado-Vides J."/>
            <person name="Glasner J.D."/>
            <person name="Rode C.K."/>
            <person name="Mayhew G.F."/>
            <person name="Gregor J."/>
            <person name="Davis N.W."/>
            <person name="Kirkpatrick H.A."/>
            <person name="Goeden M.A."/>
            <person name="Rose D.J."/>
            <person name="Mau B."/>
            <person name="Shao Y."/>
        </authorList>
    </citation>
    <scope>NUCLEOTIDE SEQUENCE [LARGE SCALE GENOMIC DNA]</scope>
    <source>
        <strain>K12 / MG1655 / ATCC 47076</strain>
    </source>
</reference>
<reference key="4">
    <citation type="journal article" date="2006" name="Mol. Syst. Biol.">
        <title>Highly accurate genome sequences of Escherichia coli K-12 strains MG1655 and W3110.</title>
        <authorList>
            <person name="Hayashi K."/>
            <person name="Morooka N."/>
            <person name="Yamamoto Y."/>
            <person name="Fujita K."/>
            <person name="Isono K."/>
            <person name="Choi S."/>
            <person name="Ohtsubo E."/>
            <person name="Baba T."/>
            <person name="Wanner B.L."/>
            <person name="Mori H."/>
            <person name="Horiuchi T."/>
        </authorList>
    </citation>
    <scope>NUCLEOTIDE SEQUENCE [LARGE SCALE GENOMIC DNA]</scope>
    <source>
        <strain>K12 / W3110 / ATCC 27325 / DSM 5911</strain>
    </source>
</reference>
<reference key="5">
    <citation type="journal article" date="1990" name="Genetics">
        <title>Characterization and nucleotide sequence of the cryptic cel operon of Escherichia coli K12.</title>
        <authorList>
            <person name="Parker L.L."/>
            <person name="Hall B.G."/>
        </authorList>
    </citation>
    <scope>NUCLEOTIDE SEQUENCE [GENOMIC DNA] OF 1-76</scope>
    <source>
        <strain>K12</strain>
    </source>
</reference>
<reference key="6">
    <citation type="journal article" date="1991" name="J. Bacteriol.">
        <title>Nucleotide sequence of Escherichia coli katE, which encodes catalase HPII.</title>
        <authorList>
            <person name="von Ossowski I."/>
            <person name="Mulvey M.R."/>
            <person name="Leco P.A."/>
            <person name="Borys A."/>
            <person name="Loewen P.C."/>
        </authorList>
    </citation>
    <scope>NUCLEOTIDE SEQUENCE [GENOMIC DNA] OF 207-249</scope>
    <source>
        <strain>K12</strain>
    </source>
</reference>
<reference key="7">
    <citation type="journal article" date="1997" name="Proc. Natl. Acad. Sci. U.S.A.">
        <title>Wild-type Escherichia coli grows on the chitin disaccharide, N,N'-diacetylchitobiose, by expressing the cel operon.</title>
        <authorList>
            <person name="Keyhani N.O."/>
            <person name="Roseman S."/>
        </authorList>
    </citation>
    <scope>INDUCTION</scope>
    <scope>PATHWAY</scope>
    <scope>GENE NAME</scope>
</reference>
<reference key="8">
    <citation type="journal article" date="2012" name="J. Bacteriol.">
        <title>The chbG gene of the chitobiose (chb) operon of Escherichia coli encodes a chitooligosaccharide deacetylase.</title>
        <authorList>
            <person name="Verma S.C."/>
            <person name="Mahadevan S."/>
        </authorList>
    </citation>
    <scope>FUNCTION</scope>
    <scope>CATALYTIC ACTIVITY</scope>
    <scope>MUTAGENESIS OF ASP-11; HIS-61 AND HIS-125</scope>
    <scope>DISRUPTION PHENOTYPE</scope>
    <scope>SUBSTRATE SPECIFICITY</scope>
    <scope>SUBCELLULAR LOCATION</scope>
</reference>
<evidence type="ECO:0000250" key="1">
    <source>
        <dbReference type="UniProtKB" id="Q53WD3"/>
    </source>
</evidence>
<evidence type="ECO:0000255" key="2">
    <source>
        <dbReference type="HAMAP-Rule" id="MF_01246"/>
    </source>
</evidence>
<evidence type="ECO:0000269" key="3">
    <source>
    </source>
</evidence>
<evidence type="ECO:0000269" key="4">
    <source>
    </source>
</evidence>
<evidence type="ECO:0000303" key="5">
    <source>
    </source>
</evidence>
<evidence type="ECO:0000303" key="6">
    <source>
    </source>
</evidence>
<evidence type="ECO:0000305" key="7"/>
<evidence type="ECO:0000305" key="8">
    <source>
    </source>
</evidence>
<gene>
    <name evidence="6" type="primary">chbG</name>
    <name type="synonym">ydjC</name>
    <name type="ordered locus">b1733</name>
    <name type="ordered locus">JW1722</name>
</gene>
<keyword id="KW-0119">Carbohydrate metabolism</keyword>
<keyword id="KW-0146">Chitin degradation</keyword>
<keyword id="KW-0963">Cytoplasm</keyword>
<keyword id="KW-0378">Hydrolase</keyword>
<keyword id="KW-0460">Magnesium</keyword>
<keyword id="KW-0479">Metal-binding</keyword>
<keyword id="KW-0624">Polysaccharide degradation</keyword>
<keyword id="KW-1185">Reference proteome</keyword>
<accession>P37794</accession>
<accession>P77435</accession>
<protein>
    <recommendedName>
        <fullName evidence="5">Chitooligosaccharide deacetylase ChbG</fullName>
        <shortName evidence="5">COD</shortName>
        <ecNumber evidence="3">3.5.1.105</ecNumber>
    </recommendedName>
    <alternativeName>
        <fullName evidence="5">Chitin disaccharide deacetylase</fullName>
    </alternativeName>
    <alternativeName>
        <fullName evidence="5">Chitobiose deacetylase</fullName>
    </alternativeName>
    <alternativeName>
        <fullName evidence="5">Chitobiose-6P deacetylase</fullName>
    </alternativeName>
    <alternativeName>
        <fullName evidence="5">Chitotriose deacetylase</fullName>
    </alternativeName>
    <alternativeName>
        <fullName evidence="5">Chitotriose-6P deacetylase</fullName>
    </alternativeName>
</protein>